<proteinExistence type="evidence at protein level"/>
<name>PLD3A_HUMAN</name>
<feature type="chain" id="PRO_0000295215" description="PRELI domain containing protein 3A">
    <location>
        <begin position="1"/>
        <end position="172"/>
    </location>
</feature>
<feature type="domain" description="PRELI/MSF1" evidence="1">
    <location>
        <begin position="1"/>
        <end position="172"/>
    </location>
</feature>
<feature type="site" description="Important for interaction with TRIAP1" evidence="2">
    <location>
        <position position="36"/>
    </location>
</feature>
<feature type="site" description="Important for interaction with TRIAP1" evidence="2">
    <location>
        <position position="49"/>
    </location>
</feature>
<feature type="splice variant" id="VSP_056666" description="In isoform 2." evidence="3">
    <location>
        <begin position="1"/>
        <end position="21"/>
    </location>
</feature>
<feature type="mutagenesis site" description="Impairs interaction with TRIAP1." evidence="2">
    <original>V</original>
    <variation>A</variation>
    <location>
        <position position="36"/>
    </location>
</feature>
<feature type="strand" evidence="6">
    <location>
        <begin position="2"/>
        <end position="12"/>
    </location>
</feature>
<feature type="helix" evidence="6">
    <location>
        <begin position="14"/>
        <end position="21"/>
    </location>
</feature>
<feature type="strand" evidence="6">
    <location>
        <begin position="33"/>
        <end position="43"/>
    </location>
</feature>
<feature type="strand" evidence="6">
    <location>
        <begin position="49"/>
        <end position="60"/>
    </location>
</feature>
<feature type="helix" evidence="6">
    <location>
        <begin position="62"/>
        <end position="69"/>
    </location>
</feature>
<feature type="strand" evidence="6">
    <location>
        <begin position="76"/>
        <end position="85"/>
    </location>
</feature>
<feature type="turn" evidence="6">
    <location>
        <begin position="86"/>
        <end position="89"/>
    </location>
</feature>
<feature type="strand" evidence="6">
    <location>
        <begin position="90"/>
        <end position="97"/>
    </location>
</feature>
<feature type="turn" evidence="6">
    <location>
        <begin position="101"/>
        <end position="103"/>
    </location>
</feature>
<feature type="strand" evidence="6">
    <location>
        <begin position="104"/>
        <end position="114"/>
    </location>
</feature>
<feature type="strand" evidence="6">
    <location>
        <begin position="122"/>
        <end position="134"/>
    </location>
</feature>
<feature type="helix" evidence="6">
    <location>
        <begin position="139"/>
        <end position="164"/>
    </location>
</feature>
<sequence length="172" mass="19247">MKIWSSEHVFGHPWDTVIQAAMRKYPNPMNPSVLGVDVLQRRVDGRGRLHSLRLLSTEWGLPSLVRAILGTSRTLTYIREHSVVDPVEKKMELCSTNITLTNLVSVNERLVYTPHPENPEMTVLTQEAIITVKGISLGSYLESLMANTISSNAKKGWAAIEWIIEHSESAVS</sequence>
<keyword id="KW-0002">3D-structure</keyword>
<keyword id="KW-0025">Alternative splicing</keyword>
<keyword id="KW-0445">Lipid transport</keyword>
<keyword id="KW-0496">Mitochondrion</keyword>
<keyword id="KW-1267">Proteomics identification</keyword>
<keyword id="KW-1185">Reference proteome</keyword>
<keyword id="KW-0813">Transport</keyword>
<evidence type="ECO:0000255" key="1">
    <source>
        <dbReference type="PROSITE-ProRule" id="PRU00158"/>
    </source>
</evidence>
<evidence type="ECO:0000269" key="2">
    <source>
    </source>
</evidence>
<evidence type="ECO:0000303" key="3">
    <source>
    </source>
</evidence>
<evidence type="ECO:0000305" key="4"/>
<evidence type="ECO:0000305" key="5">
    <source>
    </source>
</evidence>
<evidence type="ECO:0007829" key="6">
    <source>
        <dbReference type="PDB" id="8AG0"/>
    </source>
</evidence>
<organism>
    <name type="scientific">Homo sapiens</name>
    <name type="common">Human</name>
    <dbReference type="NCBI Taxonomy" id="9606"/>
    <lineage>
        <taxon>Eukaryota</taxon>
        <taxon>Metazoa</taxon>
        <taxon>Chordata</taxon>
        <taxon>Craniata</taxon>
        <taxon>Vertebrata</taxon>
        <taxon>Euteleostomi</taxon>
        <taxon>Mammalia</taxon>
        <taxon>Eutheria</taxon>
        <taxon>Euarchontoglires</taxon>
        <taxon>Primates</taxon>
        <taxon>Haplorrhini</taxon>
        <taxon>Catarrhini</taxon>
        <taxon>Hominidae</taxon>
        <taxon>Homo</taxon>
    </lineage>
</organism>
<gene>
    <name type="primary">PRELID3A</name>
    <name type="synonym">C18orf43</name>
    <name type="synonym">SLMO1</name>
</gene>
<dbReference type="EMBL" id="AK056046">
    <property type="protein sequence ID" value="BAB71083.1"/>
    <property type="molecule type" value="mRNA"/>
</dbReference>
<dbReference type="EMBL" id="AK303325">
    <property type="protein sequence ID" value="BAG64391.1"/>
    <property type="molecule type" value="mRNA"/>
</dbReference>
<dbReference type="EMBL" id="EF444975">
    <property type="protein sequence ID" value="ACA05988.1"/>
    <property type="molecule type" value="Genomic_DNA"/>
</dbReference>
<dbReference type="EMBL" id="AP001029">
    <property type="status" value="NOT_ANNOTATED_CDS"/>
    <property type="molecule type" value="Genomic_DNA"/>
</dbReference>
<dbReference type="EMBL" id="CH471113">
    <property type="protein sequence ID" value="EAX01547.1"/>
    <property type="molecule type" value="Genomic_DNA"/>
</dbReference>
<dbReference type="EMBL" id="CH471113">
    <property type="protein sequence ID" value="EAX01548.1"/>
    <property type="molecule type" value="Genomic_DNA"/>
</dbReference>
<dbReference type="EMBL" id="CH471113">
    <property type="protein sequence ID" value="EAX01549.1"/>
    <property type="molecule type" value="Genomic_DNA"/>
</dbReference>
<dbReference type="EMBL" id="BC106750">
    <property type="protein sequence ID" value="AAI06751.1"/>
    <property type="molecule type" value="mRNA"/>
</dbReference>
<dbReference type="EMBL" id="CR627465">
    <property type="protein sequence ID" value="CAH10669.1"/>
    <property type="molecule type" value="mRNA"/>
</dbReference>
<dbReference type="CCDS" id="CCDS11860.1">
    <molecule id="Q96N28-1"/>
</dbReference>
<dbReference type="CCDS" id="CCDS77154.1">
    <molecule id="Q96N28-2"/>
</dbReference>
<dbReference type="RefSeq" id="NP_001135877.1">
    <molecule id="Q96N28-1"/>
    <property type="nucleotide sequence ID" value="NM_001142405.2"/>
</dbReference>
<dbReference type="RefSeq" id="NP_001135878.1">
    <molecule id="Q96N28-2"/>
    <property type="nucleotide sequence ID" value="NM_001142406.1"/>
</dbReference>
<dbReference type="RefSeq" id="NP_006544.2">
    <molecule id="Q96N28-1"/>
    <property type="nucleotide sequence ID" value="NM_006553.3"/>
</dbReference>
<dbReference type="RefSeq" id="XP_024306844.1">
    <molecule id="Q96N28-2"/>
    <property type="nucleotide sequence ID" value="XM_024451076.2"/>
</dbReference>
<dbReference type="PDB" id="4XZV">
    <property type="method" value="X-ray"/>
    <property type="resolution" value="3.58 A"/>
    <property type="chains" value="B/D/F/H=1-172"/>
</dbReference>
<dbReference type="PDB" id="8AG0">
    <property type="method" value="X-ray"/>
    <property type="resolution" value="2.70 A"/>
    <property type="chains" value="A=1-172"/>
</dbReference>
<dbReference type="PDBsum" id="4XZV"/>
<dbReference type="PDBsum" id="8AG0"/>
<dbReference type="SMR" id="Q96N28"/>
<dbReference type="BioGRID" id="115893">
    <property type="interactions" value="9"/>
</dbReference>
<dbReference type="FunCoup" id="Q96N28">
    <property type="interactions" value="458"/>
</dbReference>
<dbReference type="IntAct" id="Q96N28">
    <property type="interactions" value="4"/>
</dbReference>
<dbReference type="STRING" id="9606.ENSP00000338988"/>
<dbReference type="BioMuta" id="PRELID3A"/>
<dbReference type="DMDM" id="74732484"/>
<dbReference type="jPOST" id="Q96N28"/>
<dbReference type="MassIVE" id="Q96N28"/>
<dbReference type="PaxDb" id="9606-ENSP00000404700"/>
<dbReference type="PeptideAtlas" id="Q96N28"/>
<dbReference type="ProteomicsDB" id="77459">
    <molecule id="Q96N28-1"/>
</dbReference>
<dbReference type="Antibodypedia" id="54064">
    <property type="antibodies" value="22 antibodies from 6 providers"/>
</dbReference>
<dbReference type="DNASU" id="10650"/>
<dbReference type="Ensembl" id="ENST00000336990.8">
    <molecule id="Q96N28-1"/>
    <property type="protein sequence ID" value="ENSP00000338988.3"/>
    <property type="gene ID" value="ENSG00000141391.14"/>
</dbReference>
<dbReference type="Ensembl" id="ENST00000440960.6">
    <molecule id="Q96N28-1"/>
    <property type="protein sequence ID" value="ENSP00000404700.1"/>
    <property type="gene ID" value="ENSG00000141391.14"/>
</dbReference>
<dbReference type="Ensembl" id="ENST00000592149.5">
    <molecule id="Q96N28-2"/>
    <property type="protein sequence ID" value="ENSP00000466737.1"/>
    <property type="gene ID" value="ENSG00000141391.14"/>
</dbReference>
<dbReference type="GeneID" id="10650"/>
<dbReference type="KEGG" id="hsa:10650"/>
<dbReference type="MANE-Select" id="ENST00000440960.6">
    <property type="protein sequence ID" value="ENSP00000404700.1"/>
    <property type="RefSeq nucleotide sequence ID" value="NM_001142405.2"/>
    <property type="RefSeq protein sequence ID" value="NP_001135877.1"/>
</dbReference>
<dbReference type="UCSC" id="uc002kra.4">
    <molecule id="Q96N28-1"/>
    <property type="organism name" value="human"/>
</dbReference>
<dbReference type="AGR" id="HGNC:24639"/>
<dbReference type="CTD" id="10650"/>
<dbReference type="GeneCards" id="PRELID3A"/>
<dbReference type="HGNC" id="HGNC:24639">
    <property type="gene designation" value="PRELID3A"/>
</dbReference>
<dbReference type="HPA" id="ENSG00000141391">
    <property type="expression patterns" value="Low tissue specificity"/>
</dbReference>
<dbReference type="MIM" id="616545">
    <property type="type" value="gene"/>
</dbReference>
<dbReference type="neXtProt" id="NX_Q96N28"/>
<dbReference type="OpenTargets" id="ENSG00000141391"/>
<dbReference type="PharmGKB" id="PA162403903"/>
<dbReference type="VEuPathDB" id="HostDB:ENSG00000141391"/>
<dbReference type="eggNOG" id="KOG3336">
    <property type="taxonomic scope" value="Eukaryota"/>
</dbReference>
<dbReference type="GeneTree" id="ENSGT00950000182810"/>
<dbReference type="InParanoid" id="Q96N28"/>
<dbReference type="OMA" id="MMKIWST"/>
<dbReference type="OrthoDB" id="407630at2759"/>
<dbReference type="PAN-GO" id="Q96N28">
    <property type="GO annotations" value="3 GO annotations based on evolutionary models"/>
</dbReference>
<dbReference type="PhylomeDB" id="Q96N28"/>
<dbReference type="TreeFam" id="TF312873"/>
<dbReference type="PathwayCommons" id="Q96N28"/>
<dbReference type="Reactome" id="R-HSA-6803204">
    <property type="pathway name" value="TP53 Regulates Transcription of Genes Involved in Cytochrome C Release"/>
</dbReference>
<dbReference type="SignaLink" id="Q96N28"/>
<dbReference type="BioGRID-ORCS" id="10650">
    <property type="hits" value="17 hits in 1144 CRISPR screens"/>
</dbReference>
<dbReference type="ChiTaRS" id="PRELID3A">
    <property type="organism name" value="human"/>
</dbReference>
<dbReference type="EvolutionaryTrace" id="Q96N28"/>
<dbReference type="GenomeRNAi" id="10650"/>
<dbReference type="Pharos" id="Q96N28">
    <property type="development level" value="Tbio"/>
</dbReference>
<dbReference type="PRO" id="PR:Q96N28"/>
<dbReference type="Proteomes" id="UP000005640">
    <property type="component" value="Chromosome 18"/>
</dbReference>
<dbReference type="RNAct" id="Q96N28">
    <property type="molecule type" value="protein"/>
</dbReference>
<dbReference type="Bgee" id="ENSG00000141391">
    <property type="expression patterns" value="Expressed in sural nerve and 99 other cell types or tissues"/>
</dbReference>
<dbReference type="ExpressionAtlas" id="Q96N28">
    <property type="expression patterns" value="baseline and differential"/>
</dbReference>
<dbReference type="GO" id="GO:0005758">
    <property type="term" value="C:mitochondrial intermembrane space"/>
    <property type="evidence" value="ECO:0000318"/>
    <property type="project" value="GO_Central"/>
</dbReference>
<dbReference type="GO" id="GO:0005739">
    <property type="term" value="C:mitochondrion"/>
    <property type="evidence" value="ECO:0006056"/>
    <property type="project" value="FlyBase"/>
</dbReference>
<dbReference type="GO" id="GO:1990050">
    <property type="term" value="F:phosphatidic acid transfer activity"/>
    <property type="evidence" value="ECO:0000314"/>
    <property type="project" value="HGNC"/>
</dbReference>
<dbReference type="GO" id="GO:0015914">
    <property type="term" value="P:phospholipid transport"/>
    <property type="evidence" value="ECO:0000314"/>
    <property type="project" value="HGNC"/>
</dbReference>
<dbReference type="InterPro" id="IPR006797">
    <property type="entry name" value="PRELI/MSF1_dom"/>
</dbReference>
<dbReference type="InterPro" id="IPR037365">
    <property type="entry name" value="Slowmo/Ups"/>
</dbReference>
<dbReference type="PANTHER" id="PTHR11158">
    <property type="entry name" value="MSF1/PX19 RELATED"/>
    <property type="match status" value="1"/>
</dbReference>
<dbReference type="Pfam" id="PF04707">
    <property type="entry name" value="PRELI"/>
    <property type="match status" value="1"/>
</dbReference>
<dbReference type="PROSITE" id="PS50904">
    <property type="entry name" value="PRELI_MSF1"/>
    <property type="match status" value="1"/>
</dbReference>
<comment type="function">
    <text evidence="5">In vitro, the TRIAP1:PRELID3A complex mediates the transfer of phosphatidic acid (PA) between liposomes and probably functions as a PA transporter across the mitochondrion intermembrane space. Phosphatidic acid import is required for cardiolipin (CL) synthesis in the mitochondrial inner membrane.</text>
</comment>
<comment type="subunit">
    <text evidence="2">Interacts with TRIAP1.</text>
</comment>
<comment type="subcellular location">
    <subcellularLocation>
        <location evidence="4">Mitochondrion</location>
    </subcellularLocation>
</comment>
<comment type="alternative products">
    <event type="alternative splicing"/>
    <isoform>
        <id>Q96N28-1</id>
        <name>1</name>
        <sequence type="displayed"/>
    </isoform>
    <isoform>
        <id>Q96N28-2</id>
        <name>2</name>
        <sequence type="described" ref="VSP_056666"/>
    </isoform>
</comment>
<comment type="similarity">
    <text evidence="4">Belongs to the slowmo family.</text>
</comment>
<reference key="1">
    <citation type="journal article" date="2004" name="Nat. Genet.">
        <title>Complete sequencing and characterization of 21,243 full-length human cDNAs.</title>
        <authorList>
            <person name="Ota T."/>
            <person name="Suzuki Y."/>
            <person name="Nishikawa T."/>
            <person name="Otsuki T."/>
            <person name="Sugiyama T."/>
            <person name="Irie R."/>
            <person name="Wakamatsu A."/>
            <person name="Hayashi K."/>
            <person name="Sato H."/>
            <person name="Nagai K."/>
            <person name="Kimura K."/>
            <person name="Makita H."/>
            <person name="Sekine M."/>
            <person name="Obayashi M."/>
            <person name="Nishi T."/>
            <person name="Shibahara T."/>
            <person name="Tanaka T."/>
            <person name="Ishii S."/>
            <person name="Yamamoto J."/>
            <person name="Saito K."/>
            <person name="Kawai Y."/>
            <person name="Isono Y."/>
            <person name="Nakamura Y."/>
            <person name="Nagahari K."/>
            <person name="Murakami K."/>
            <person name="Yasuda T."/>
            <person name="Iwayanagi T."/>
            <person name="Wagatsuma M."/>
            <person name="Shiratori A."/>
            <person name="Sudo H."/>
            <person name="Hosoiri T."/>
            <person name="Kaku Y."/>
            <person name="Kodaira H."/>
            <person name="Kondo H."/>
            <person name="Sugawara M."/>
            <person name="Takahashi M."/>
            <person name="Kanda K."/>
            <person name="Yokoi T."/>
            <person name="Furuya T."/>
            <person name="Kikkawa E."/>
            <person name="Omura Y."/>
            <person name="Abe K."/>
            <person name="Kamihara K."/>
            <person name="Katsuta N."/>
            <person name="Sato K."/>
            <person name="Tanikawa M."/>
            <person name="Yamazaki M."/>
            <person name="Ninomiya K."/>
            <person name="Ishibashi T."/>
            <person name="Yamashita H."/>
            <person name="Murakawa K."/>
            <person name="Fujimori K."/>
            <person name="Tanai H."/>
            <person name="Kimata M."/>
            <person name="Watanabe M."/>
            <person name="Hiraoka S."/>
            <person name="Chiba Y."/>
            <person name="Ishida S."/>
            <person name="Ono Y."/>
            <person name="Takiguchi S."/>
            <person name="Watanabe S."/>
            <person name="Yosida M."/>
            <person name="Hotuta T."/>
            <person name="Kusano J."/>
            <person name="Kanehori K."/>
            <person name="Takahashi-Fujii A."/>
            <person name="Hara H."/>
            <person name="Tanase T.-O."/>
            <person name="Nomura Y."/>
            <person name="Togiya S."/>
            <person name="Komai F."/>
            <person name="Hara R."/>
            <person name="Takeuchi K."/>
            <person name="Arita M."/>
            <person name="Imose N."/>
            <person name="Musashino K."/>
            <person name="Yuuki H."/>
            <person name="Oshima A."/>
            <person name="Sasaki N."/>
            <person name="Aotsuka S."/>
            <person name="Yoshikawa Y."/>
            <person name="Matsunawa H."/>
            <person name="Ichihara T."/>
            <person name="Shiohata N."/>
            <person name="Sano S."/>
            <person name="Moriya S."/>
            <person name="Momiyama H."/>
            <person name="Satoh N."/>
            <person name="Takami S."/>
            <person name="Terashima Y."/>
            <person name="Suzuki O."/>
            <person name="Nakagawa S."/>
            <person name="Senoh A."/>
            <person name="Mizoguchi H."/>
            <person name="Goto Y."/>
            <person name="Shimizu F."/>
            <person name="Wakebe H."/>
            <person name="Hishigaki H."/>
            <person name="Watanabe T."/>
            <person name="Sugiyama A."/>
            <person name="Takemoto M."/>
            <person name="Kawakami B."/>
            <person name="Yamazaki M."/>
            <person name="Watanabe K."/>
            <person name="Kumagai A."/>
            <person name="Itakura S."/>
            <person name="Fukuzumi Y."/>
            <person name="Fujimori Y."/>
            <person name="Komiyama M."/>
            <person name="Tashiro H."/>
            <person name="Tanigami A."/>
            <person name="Fujiwara T."/>
            <person name="Ono T."/>
            <person name="Yamada K."/>
            <person name="Fujii Y."/>
            <person name="Ozaki K."/>
            <person name="Hirao M."/>
            <person name="Ohmori Y."/>
            <person name="Kawabata A."/>
            <person name="Hikiji T."/>
            <person name="Kobatake N."/>
            <person name="Inagaki H."/>
            <person name="Ikema Y."/>
            <person name="Okamoto S."/>
            <person name="Okitani R."/>
            <person name="Kawakami T."/>
            <person name="Noguchi S."/>
            <person name="Itoh T."/>
            <person name="Shigeta K."/>
            <person name="Senba T."/>
            <person name="Matsumura K."/>
            <person name="Nakajima Y."/>
            <person name="Mizuno T."/>
            <person name="Morinaga M."/>
            <person name="Sasaki M."/>
            <person name="Togashi T."/>
            <person name="Oyama M."/>
            <person name="Hata H."/>
            <person name="Watanabe M."/>
            <person name="Komatsu T."/>
            <person name="Mizushima-Sugano J."/>
            <person name="Satoh T."/>
            <person name="Shirai Y."/>
            <person name="Takahashi Y."/>
            <person name="Nakagawa K."/>
            <person name="Okumura K."/>
            <person name="Nagase T."/>
            <person name="Nomura N."/>
            <person name="Kikuchi H."/>
            <person name="Masuho Y."/>
            <person name="Yamashita R."/>
            <person name="Nakai K."/>
            <person name="Yada T."/>
            <person name="Nakamura Y."/>
            <person name="Ohara O."/>
            <person name="Isogai T."/>
            <person name="Sugano S."/>
        </authorList>
    </citation>
    <scope>NUCLEOTIDE SEQUENCE [LARGE SCALE MRNA] (ISOFORMS 1 AND 2)</scope>
    <source>
        <tissue>Thymus</tissue>
    </source>
</reference>
<reference key="2">
    <citation type="submission" date="2007-02" db="EMBL/GenBank/DDBJ databases">
        <authorList>
            <consortium name="NHLBI resequencing and genotyping service (RS&amp;G)"/>
        </authorList>
    </citation>
    <scope>NUCLEOTIDE SEQUENCE [GENOMIC DNA]</scope>
</reference>
<reference key="3">
    <citation type="journal article" date="2005" name="Nature">
        <title>DNA sequence and analysis of human chromosome 18.</title>
        <authorList>
            <person name="Nusbaum C."/>
            <person name="Zody M.C."/>
            <person name="Borowsky M.L."/>
            <person name="Kamal M."/>
            <person name="Kodira C.D."/>
            <person name="Taylor T.D."/>
            <person name="Whittaker C.A."/>
            <person name="Chang J.L."/>
            <person name="Cuomo C.A."/>
            <person name="Dewar K."/>
            <person name="FitzGerald M.G."/>
            <person name="Yang X."/>
            <person name="Abouelleil A."/>
            <person name="Allen N.R."/>
            <person name="Anderson S."/>
            <person name="Bloom T."/>
            <person name="Bugalter B."/>
            <person name="Butler J."/>
            <person name="Cook A."/>
            <person name="DeCaprio D."/>
            <person name="Engels R."/>
            <person name="Garber M."/>
            <person name="Gnirke A."/>
            <person name="Hafez N."/>
            <person name="Hall J.L."/>
            <person name="Norman C.H."/>
            <person name="Itoh T."/>
            <person name="Jaffe D.B."/>
            <person name="Kuroki Y."/>
            <person name="Lehoczky J."/>
            <person name="Lui A."/>
            <person name="Macdonald P."/>
            <person name="Mauceli E."/>
            <person name="Mikkelsen T.S."/>
            <person name="Naylor J.W."/>
            <person name="Nicol R."/>
            <person name="Nguyen C."/>
            <person name="Noguchi H."/>
            <person name="O'Leary S.B."/>
            <person name="Piqani B."/>
            <person name="Smith C.L."/>
            <person name="Talamas J.A."/>
            <person name="Topham K."/>
            <person name="Totoki Y."/>
            <person name="Toyoda A."/>
            <person name="Wain H.M."/>
            <person name="Young S.K."/>
            <person name="Zeng Q."/>
            <person name="Zimmer A.R."/>
            <person name="Fujiyama A."/>
            <person name="Hattori M."/>
            <person name="Birren B.W."/>
            <person name="Sakaki Y."/>
            <person name="Lander E.S."/>
        </authorList>
    </citation>
    <scope>NUCLEOTIDE SEQUENCE [LARGE SCALE GENOMIC DNA]</scope>
</reference>
<reference key="4">
    <citation type="submission" date="2005-09" db="EMBL/GenBank/DDBJ databases">
        <authorList>
            <person name="Mural R.J."/>
            <person name="Istrail S."/>
            <person name="Sutton G.G."/>
            <person name="Florea L."/>
            <person name="Halpern A.L."/>
            <person name="Mobarry C.M."/>
            <person name="Lippert R."/>
            <person name="Walenz B."/>
            <person name="Shatkay H."/>
            <person name="Dew I."/>
            <person name="Miller J.R."/>
            <person name="Flanigan M.J."/>
            <person name="Edwards N.J."/>
            <person name="Bolanos R."/>
            <person name="Fasulo D."/>
            <person name="Halldorsson B.V."/>
            <person name="Hannenhalli S."/>
            <person name="Turner R."/>
            <person name="Yooseph S."/>
            <person name="Lu F."/>
            <person name="Nusskern D.R."/>
            <person name="Shue B.C."/>
            <person name="Zheng X.H."/>
            <person name="Zhong F."/>
            <person name="Delcher A.L."/>
            <person name="Huson D.H."/>
            <person name="Kravitz S.A."/>
            <person name="Mouchard L."/>
            <person name="Reinert K."/>
            <person name="Remington K.A."/>
            <person name="Clark A.G."/>
            <person name="Waterman M.S."/>
            <person name="Eichler E.E."/>
            <person name="Adams M.D."/>
            <person name="Hunkapiller M.W."/>
            <person name="Myers E.W."/>
            <person name="Venter J.C."/>
        </authorList>
    </citation>
    <scope>NUCLEOTIDE SEQUENCE [LARGE SCALE GENOMIC DNA]</scope>
</reference>
<reference key="5">
    <citation type="journal article" date="2004" name="Genome Res.">
        <title>The status, quality, and expansion of the NIH full-length cDNA project: the Mammalian Gene Collection (MGC).</title>
        <authorList>
            <consortium name="The MGC Project Team"/>
        </authorList>
    </citation>
    <scope>NUCLEOTIDE SEQUENCE [LARGE SCALE MRNA] (ISOFORM 1)</scope>
</reference>
<reference key="6">
    <citation type="journal article" date="2007" name="BMC Genomics">
        <title>The full-ORF clone resource of the German cDNA consortium.</title>
        <authorList>
            <person name="Bechtel S."/>
            <person name="Rosenfelder H."/>
            <person name="Duda A."/>
            <person name="Schmidt C.P."/>
            <person name="Ernst U."/>
            <person name="Wellenreuther R."/>
            <person name="Mehrle A."/>
            <person name="Schuster C."/>
            <person name="Bahr A."/>
            <person name="Bloecker H."/>
            <person name="Heubner D."/>
            <person name="Hoerlein A."/>
            <person name="Michel G."/>
            <person name="Wedler H."/>
            <person name="Koehrer K."/>
            <person name="Ottenwaelder B."/>
            <person name="Poustka A."/>
            <person name="Wiemann S."/>
            <person name="Schupp I."/>
        </authorList>
    </citation>
    <scope>NUCLEOTIDE SEQUENCE [LARGE SCALE MRNA] OF 68-172 (ISOFORM 1)</scope>
    <source>
        <tissue>Brain</tissue>
    </source>
</reference>
<reference key="7">
    <citation type="journal article" date="2015" name="EMBO Rep.">
        <title>Structural insight into the TRIAP1/PRELI-like domain family of mitochondrial phospholipid transfer complexes.</title>
        <authorList>
            <person name="Miliara X."/>
            <person name="Garnett J.A."/>
            <person name="Tatsuta T."/>
            <person name="Abid Ali F."/>
            <person name="Baldie H."/>
            <person name="Perez-Dorado I."/>
            <person name="Simpson P."/>
            <person name="Yague E."/>
            <person name="Langer T."/>
            <person name="Matthews S."/>
        </authorList>
    </citation>
    <scope>X-RAY CRYSTALLOGRAPHY (3.58 ANGSTROMS) IN COMPLEX WITH TRIAP1</scope>
    <scope>FUNCTION</scope>
    <scope>INTERACTION WITH TRIAP1</scope>
    <scope>MUTAGENESIS OF VAL-36</scope>
</reference>
<accession>Q96N28</accession>
<accession>B0YJ10</accession>
<accession>B4E0C9</accession>
<accession>D3DUJ1</accession>
<accession>Q6AHX2</accession>
<protein>
    <recommendedName>
        <fullName>PRELI domain containing protein 3A</fullName>
    </recommendedName>
    <alternativeName>
        <fullName>Protein slowmo homolog 1</fullName>
    </alternativeName>
</protein>